<accession>Q94272</accession>
<keyword id="KW-0106">Calcium</keyword>
<keyword id="KW-0378">Hydrolase</keyword>
<keyword id="KW-0460">Magnesium</keyword>
<keyword id="KW-0479">Metal-binding</keyword>
<keyword id="KW-0585">Phenylalanine catabolism</keyword>
<keyword id="KW-1185">Reference proteome</keyword>
<keyword id="KW-0828">Tyrosine catabolism</keyword>
<protein>
    <recommendedName>
        <fullName evidence="2">Fumarylacetoacetase</fullName>
        <shortName evidence="1">FAA</shortName>
        <ecNumber evidence="1 2">3.7.1.2</ecNumber>
    </recommendedName>
    <alternativeName>
        <fullName>Beta-diketonase</fullName>
    </alternativeName>
    <alternativeName>
        <fullName evidence="2">Fumarylacetoacetate hydrolase</fullName>
    </alternativeName>
</protein>
<dbReference type="EC" id="3.7.1.2" evidence="1 2"/>
<dbReference type="EMBL" id="BX284606">
    <property type="protein sequence ID" value="CCD72626.1"/>
    <property type="molecule type" value="Genomic_DNA"/>
</dbReference>
<dbReference type="PIR" id="T25813">
    <property type="entry name" value="T25813"/>
</dbReference>
<dbReference type="RefSeq" id="NP_509083.1">
    <property type="nucleotide sequence ID" value="NM_076682.7"/>
</dbReference>
<dbReference type="SMR" id="Q94272"/>
<dbReference type="DIP" id="DIP-24371N"/>
<dbReference type="FunCoup" id="Q94272">
    <property type="interactions" value="926"/>
</dbReference>
<dbReference type="STRING" id="6239.K10C2.4.2"/>
<dbReference type="PaxDb" id="6239-K10C2.4.1"/>
<dbReference type="PeptideAtlas" id="Q94272"/>
<dbReference type="EnsemblMetazoa" id="K10C2.4.1">
    <property type="protein sequence ID" value="K10C2.4.1"/>
    <property type="gene ID" value="WBGene00019620"/>
</dbReference>
<dbReference type="GeneID" id="180918"/>
<dbReference type="KEGG" id="cel:CELE_K10C2.4"/>
<dbReference type="UCSC" id="K10C2.4.1">
    <property type="organism name" value="c. elegans"/>
</dbReference>
<dbReference type="AGR" id="WB:WBGene00019620"/>
<dbReference type="CTD" id="180918"/>
<dbReference type="WormBase" id="K10C2.4">
    <property type="protein sequence ID" value="CE04750"/>
    <property type="gene ID" value="WBGene00019620"/>
    <property type="gene designation" value="fah-1"/>
</dbReference>
<dbReference type="eggNOG" id="KOG2843">
    <property type="taxonomic scope" value="Eukaryota"/>
</dbReference>
<dbReference type="GeneTree" id="ENSGT00390000008646"/>
<dbReference type="HOGENOM" id="CLU_026207_2_0_1"/>
<dbReference type="InParanoid" id="Q94272"/>
<dbReference type="OMA" id="YWTAAQQ"/>
<dbReference type="OrthoDB" id="9971669at2759"/>
<dbReference type="PhylomeDB" id="Q94272"/>
<dbReference type="BRENDA" id="3.7.1.2">
    <property type="organism ID" value="1045"/>
</dbReference>
<dbReference type="Reactome" id="R-CEL-8963684">
    <property type="pathway name" value="Tyrosine catabolism"/>
</dbReference>
<dbReference type="UniPathway" id="UPA00139">
    <property type="reaction ID" value="UER00341"/>
</dbReference>
<dbReference type="PRO" id="PR:Q94272"/>
<dbReference type="Proteomes" id="UP000001940">
    <property type="component" value="Chromosome X"/>
</dbReference>
<dbReference type="Bgee" id="WBGene00019620">
    <property type="expression patterns" value="Expressed in larva and 4 other cell types or tissues"/>
</dbReference>
<dbReference type="GO" id="GO:0004334">
    <property type="term" value="F:fumarylacetoacetase activity"/>
    <property type="evidence" value="ECO:0000318"/>
    <property type="project" value="GO_Central"/>
</dbReference>
<dbReference type="GO" id="GO:0046872">
    <property type="term" value="F:metal ion binding"/>
    <property type="evidence" value="ECO:0007669"/>
    <property type="project" value="UniProtKB-KW"/>
</dbReference>
<dbReference type="GO" id="GO:1902000">
    <property type="term" value="P:homogentisate catabolic process"/>
    <property type="evidence" value="ECO:0000318"/>
    <property type="project" value="GO_Central"/>
</dbReference>
<dbReference type="GO" id="GO:0006559">
    <property type="term" value="P:L-phenylalanine catabolic process"/>
    <property type="evidence" value="ECO:0000318"/>
    <property type="project" value="GO_Central"/>
</dbReference>
<dbReference type="GO" id="GO:0006572">
    <property type="term" value="P:tyrosine catabolic process"/>
    <property type="evidence" value="ECO:0000318"/>
    <property type="project" value="GO_Central"/>
</dbReference>
<dbReference type="FunFam" id="2.30.30.230:FF:000001">
    <property type="entry name" value="Fumarylacetoacetase"/>
    <property type="match status" value="1"/>
</dbReference>
<dbReference type="FunFam" id="3.90.850.10:FF:000004">
    <property type="entry name" value="Fumarylacetoacetase"/>
    <property type="match status" value="1"/>
</dbReference>
<dbReference type="Gene3D" id="2.30.30.230">
    <property type="entry name" value="Fumarylacetoacetase, N-terminal domain"/>
    <property type="match status" value="1"/>
</dbReference>
<dbReference type="Gene3D" id="3.90.850.10">
    <property type="entry name" value="Fumarylacetoacetase-like, C-terminal domain"/>
    <property type="match status" value="1"/>
</dbReference>
<dbReference type="InterPro" id="IPR005959">
    <property type="entry name" value="Fumarylacetoacetase"/>
</dbReference>
<dbReference type="InterPro" id="IPR011234">
    <property type="entry name" value="Fumarylacetoacetase-like_C"/>
</dbReference>
<dbReference type="InterPro" id="IPR036663">
    <property type="entry name" value="Fumarylacetoacetase_C_sf"/>
</dbReference>
<dbReference type="InterPro" id="IPR015377">
    <property type="entry name" value="Fumarylacetoacetase_N"/>
</dbReference>
<dbReference type="InterPro" id="IPR036462">
    <property type="entry name" value="Fumarylacetoacetase_N_sf"/>
</dbReference>
<dbReference type="NCBIfam" id="TIGR01266">
    <property type="entry name" value="fum_ac_acetase"/>
    <property type="match status" value="1"/>
</dbReference>
<dbReference type="PANTHER" id="PTHR43069">
    <property type="entry name" value="FUMARYLACETOACETASE"/>
    <property type="match status" value="1"/>
</dbReference>
<dbReference type="PANTHER" id="PTHR43069:SF2">
    <property type="entry name" value="FUMARYLACETOACETASE"/>
    <property type="match status" value="1"/>
</dbReference>
<dbReference type="Pfam" id="PF01557">
    <property type="entry name" value="FAA_hydrolase"/>
    <property type="match status" value="1"/>
</dbReference>
<dbReference type="Pfam" id="PF09298">
    <property type="entry name" value="FAA_hydrolase_N"/>
    <property type="match status" value="1"/>
</dbReference>
<dbReference type="SUPFAM" id="SSF56529">
    <property type="entry name" value="FAH"/>
    <property type="match status" value="1"/>
</dbReference>
<dbReference type="SUPFAM" id="SSF63433">
    <property type="entry name" value="Fumarylacetoacetate hydrolase, FAH, N-terminal domain"/>
    <property type="match status" value="1"/>
</dbReference>
<gene>
    <name evidence="6" type="primary">fah-1</name>
    <name evidence="6" type="synonym">phi-43</name>
    <name evidence="6" type="ORF">K10C2.4</name>
</gene>
<evidence type="ECO:0000250" key="1">
    <source>
        <dbReference type="UniProtKB" id="P35505"/>
    </source>
</evidence>
<evidence type="ECO:0000255" key="2">
    <source>
        <dbReference type="RuleBase" id="RU366008"/>
    </source>
</evidence>
<evidence type="ECO:0000269" key="3">
    <source>
    </source>
</evidence>
<evidence type="ECO:0000305" key="4"/>
<evidence type="ECO:0000312" key="5">
    <source>
        <dbReference type="Proteomes" id="UP000001940"/>
    </source>
</evidence>
<evidence type="ECO:0000312" key="6">
    <source>
        <dbReference type="WormBase" id="K10C2.4"/>
    </source>
</evidence>
<sequence length="418" mass="46044">MKSFVSVPQNSDFPIQNLPYGVFSTKADSSRHIGVAIGDQILNLAEIANLFDGPQLKAHQDVFKQSTLNAFMALPRPAWLEARARIQQLLSEDCAVLRDNAHLRSRALVAQSDATMHLPAQIGDYTDFYSSIHHATNVGIMFRGKENALMPNWKWLPVGYHGRASSIVVSGTDLKRPVGQTKAPDAEVPSFGPSKLMDFELEMAFFVGGPENELGTRVPIEKAEDRIFGVVLMNDWSARDIQAWEYVPLGPFLAKSFATTVSPWVVSIEALRPYFVENPVQDPVPPAYLHHDDPFTLDINLAVSIRPEGDAVDHIVCKTNFKHLYWTLKQQLAHHTVNGCNLRAGDLLGSGTVSGPEEGAYGSMLELSWRGAKEVPVGSEIRKFLKDGDEVNLSGVCEKNGVRIGFGECRGKVLPADI</sequence>
<reference evidence="5" key="1">
    <citation type="journal article" date="1998" name="Science">
        <title>Genome sequence of the nematode C. elegans: a platform for investigating biology.</title>
        <authorList>
            <consortium name="The C. elegans sequencing consortium"/>
        </authorList>
    </citation>
    <scope>NUCLEOTIDE SEQUENCE [LARGE SCALE GENOMIC DNA]</scope>
    <source>
        <strain evidence="5">Bristol N2</strain>
    </source>
</reference>
<reference evidence="4" key="2">
    <citation type="journal article" date="2008" name="J. Biol. Chem.">
        <title>The Caenorhabditis elegans K10C2.4 gene encodes a member of the fumarylacetoacetate hydrolase family: a Caenorhabditis elegans model of type I tyrosinemia.</title>
        <authorList>
            <person name="Fisher A.L."/>
            <person name="Page K.E."/>
            <person name="Lithgow G.J."/>
            <person name="Nash L."/>
        </authorList>
    </citation>
    <scope>FUNCTION</scope>
    <scope>TISSUE SPECIFICITY</scope>
    <scope>DISRUPTION PHENOTYPE</scope>
</reference>
<organism evidence="5">
    <name type="scientific">Caenorhabditis elegans</name>
    <dbReference type="NCBI Taxonomy" id="6239"/>
    <lineage>
        <taxon>Eukaryota</taxon>
        <taxon>Metazoa</taxon>
        <taxon>Ecdysozoa</taxon>
        <taxon>Nematoda</taxon>
        <taxon>Chromadorea</taxon>
        <taxon>Rhabditida</taxon>
        <taxon>Rhabditina</taxon>
        <taxon>Rhabditomorpha</taxon>
        <taxon>Rhabditoidea</taxon>
        <taxon>Rhabditidae</taxon>
        <taxon>Peloderinae</taxon>
        <taxon>Caenorhabditis</taxon>
    </lineage>
</organism>
<feature type="chain" id="PRO_0000453177" description="Fumarylacetoacetase">
    <location>
        <begin position="1"/>
        <end position="418"/>
    </location>
</feature>
<feature type="active site" description="Proton acceptor" evidence="1">
    <location>
        <position position="134"/>
    </location>
</feature>
<feature type="binding site" evidence="1">
    <location>
        <position position="127"/>
    </location>
    <ligand>
        <name>Ca(2+)</name>
        <dbReference type="ChEBI" id="CHEBI:29108"/>
    </ligand>
</feature>
<feature type="binding site" evidence="1">
    <location>
        <position position="200"/>
    </location>
    <ligand>
        <name>Ca(2+)</name>
        <dbReference type="ChEBI" id="CHEBI:29108"/>
    </ligand>
</feature>
<feature type="binding site" evidence="1">
    <location>
        <position position="202"/>
    </location>
    <ligand>
        <name>Ca(2+)</name>
        <dbReference type="ChEBI" id="CHEBI:29108"/>
    </ligand>
</feature>
<feature type="binding site" evidence="1">
    <location>
        <position position="235"/>
    </location>
    <ligand>
        <name>Ca(2+)</name>
        <dbReference type="ChEBI" id="CHEBI:29108"/>
    </ligand>
</feature>
<feature type="binding site" evidence="1">
    <location>
        <position position="235"/>
    </location>
    <ligand>
        <name>Mg(2+)</name>
        <dbReference type="ChEBI" id="CHEBI:18420"/>
    </ligand>
</feature>
<feature type="binding site" evidence="1">
    <location>
        <position position="255"/>
    </location>
    <ligand>
        <name>Mg(2+)</name>
        <dbReference type="ChEBI" id="CHEBI:18420"/>
    </ligand>
</feature>
<feature type="binding site" evidence="1">
    <location>
        <position position="259"/>
    </location>
    <ligand>
        <name>Mg(2+)</name>
        <dbReference type="ChEBI" id="CHEBI:18420"/>
    </ligand>
</feature>
<name>FAAA_CAEEL</name>
<proteinExistence type="evidence at transcript level"/>
<comment type="function">
    <text evidence="3">Fumarylacetoacetase involved in the tyrosine degradation pathway.</text>
</comment>
<comment type="catalytic activity">
    <reaction evidence="1 2">
        <text>4-fumarylacetoacetate + H2O = acetoacetate + fumarate + H(+)</text>
        <dbReference type="Rhea" id="RHEA:10244"/>
        <dbReference type="ChEBI" id="CHEBI:13705"/>
        <dbReference type="ChEBI" id="CHEBI:15377"/>
        <dbReference type="ChEBI" id="CHEBI:15378"/>
        <dbReference type="ChEBI" id="CHEBI:18034"/>
        <dbReference type="ChEBI" id="CHEBI:29806"/>
        <dbReference type="EC" id="3.7.1.2"/>
    </reaction>
</comment>
<comment type="cofactor">
    <cofactor evidence="1">
        <name>Ca(2+)</name>
        <dbReference type="ChEBI" id="CHEBI:29108"/>
    </cofactor>
</comment>
<comment type="cofactor">
    <cofactor evidence="1">
        <name>Mg(2+)</name>
        <dbReference type="ChEBI" id="CHEBI:18420"/>
    </cofactor>
</comment>
<comment type="pathway">
    <text evidence="1 2">Amino-acid degradation; L-phenylalanine degradation; acetoacetate and fumarate from L-phenylalanine: step 6/6.</text>
</comment>
<comment type="tissue specificity">
    <text evidence="3">Highly expressed in the intestine and the hypodermis.</text>
</comment>
<comment type="disruption phenotype">
    <text evidence="3">RNAi-mediated knockdown from hatching results in stunted growth, reduced fertility, progressive destruction of the intestine by adulthood characterized by the thinning of the intestinal wall and loss of intracellular lipid droplets, which eventually culminates in lethality (PubMed:18227072). RNAi-mediated knockdown results in activation of cellular stress pathways, and thus the intestinal damage is most likely due to activation of oxidative stress responses and ER stress responses in the intestine (PubMed:18227072). The reduced fertility phenotype is enhanced in response to exogenous tyrosine or homogentisic acid (PubMed:18227072). RNAi-mediated knockdown together with tatn-1 RNAi, hpd-1 RNAi or hgo-1 RNAi rescues the impaired growth and fertility defects in the single fah-1 RNAi mutant (PubMed:18227072).</text>
</comment>
<comment type="similarity">
    <text evidence="2">Belongs to the FAH family.</text>
</comment>